<accession>P0A4F8</accession>
<accession>P35121</accession>
<name>OCCT_RHIRD</name>
<geneLocation type="plasmid">
    <name>pTiA6NC</name>
</geneLocation>
<geneLocation type="plasmid">
    <name>pTiB6S3</name>
</geneLocation>
<reference key="1">
    <citation type="journal article" date="1991" name="J. Bacteriol.">
        <title>Characterization of a putative periplasmic transport system for octopine accumulation encoded by Agrobacterium tumefaciens Ti plasmid pTiA6.</title>
        <authorList>
            <person name="Valdivia R.H."/>
            <person name="Wang L."/>
            <person name="Winans S.C."/>
        </authorList>
    </citation>
    <scope>NUCLEOTIDE SEQUENCE [GENOMIC DNA]</scope>
    <source>
        <plasmid>pTiA6NC</plasmid>
    </source>
</reference>
<reference key="2">
    <citation type="journal article" date="1992" name="J. Bacteriol.">
        <title>Opine transport genes in the octopine (occ) and nopaline (noc) catabolic regions in Ti plasmids of Agrobacterium tumefaciens.</title>
        <authorList>
            <person name="Zanker H."/>
            <person name="von Lintig J."/>
            <person name="Schroeder J."/>
        </authorList>
    </citation>
    <scope>NUCLEOTIDE SEQUENCE [GENOMIC DNA]</scope>
    <source>
        <plasmid>pTiB6S3</plasmid>
    </source>
</reference>
<protein>
    <recommendedName>
        <fullName>Octopine-binding periplasmic protein</fullName>
    </recommendedName>
</protein>
<proteinExistence type="evidence at protein level"/>
<feature type="signal peptide" evidence="2">
    <location>
        <begin position="1"/>
        <end position="20"/>
    </location>
</feature>
<feature type="chain" id="PRO_0000031768" description="Octopine-binding periplasmic protein">
    <location>
        <begin position="21"/>
        <end position="276"/>
    </location>
</feature>
<feature type="disulfide bond" evidence="1">
    <location>
        <begin position="57"/>
        <end position="64"/>
    </location>
</feature>
<feature type="sequence conflict" description="In Ref. 2; AAA50517." evidence="3" ref="2">
    <original>D</original>
    <variation>S</variation>
    <location>
        <position position="169"/>
    </location>
</feature>
<feature type="strand" evidence="5">
    <location>
        <begin position="23"/>
        <end position="29"/>
    </location>
</feature>
<feature type="strand" evidence="4">
    <location>
        <begin position="31"/>
        <end position="33"/>
    </location>
</feature>
<feature type="turn" evidence="5">
    <location>
        <begin position="34"/>
        <end position="36"/>
    </location>
</feature>
<feature type="strand" evidence="5">
    <location>
        <begin position="37"/>
        <end position="39"/>
    </location>
</feature>
<feature type="strand" evidence="4">
    <location>
        <begin position="41"/>
        <end position="43"/>
    </location>
</feature>
<feature type="strand" evidence="5">
    <location>
        <begin position="45"/>
        <end position="47"/>
    </location>
</feature>
<feature type="helix" evidence="5">
    <location>
        <begin position="48"/>
        <end position="59"/>
    </location>
</feature>
<feature type="strand" evidence="5">
    <location>
        <begin position="62"/>
        <end position="68"/>
    </location>
</feature>
<feature type="helix" evidence="4">
    <location>
        <begin position="71"/>
        <end position="73"/>
    </location>
</feature>
<feature type="helix" evidence="5">
    <location>
        <begin position="74"/>
        <end position="79"/>
    </location>
</feature>
<feature type="strand" evidence="5">
    <location>
        <begin position="82"/>
        <end position="86"/>
    </location>
</feature>
<feature type="helix" evidence="5">
    <location>
        <begin position="94"/>
        <end position="97"/>
    </location>
</feature>
<feature type="strand" evidence="4">
    <location>
        <begin position="100"/>
        <end position="102"/>
    </location>
</feature>
<feature type="strand" evidence="4">
    <location>
        <begin position="106"/>
        <end position="108"/>
    </location>
</feature>
<feature type="strand" evidence="5">
    <location>
        <begin position="111"/>
        <end position="116"/>
    </location>
</feature>
<feature type="helix" evidence="5">
    <location>
        <begin position="120"/>
        <end position="123"/>
    </location>
</feature>
<feature type="turn" evidence="5">
    <location>
        <begin position="125"/>
        <end position="128"/>
    </location>
</feature>
<feature type="strand" evidence="5">
    <location>
        <begin position="130"/>
        <end position="132"/>
    </location>
</feature>
<feature type="turn" evidence="5">
    <location>
        <begin position="133"/>
        <end position="135"/>
    </location>
</feature>
<feature type="helix" evidence="5">
    <location>
        <begin position="137"/>
        <end position="150"/>
    </location>
</feature>
<feature type="turn" evidence="5">
    <location>
        <begin position="151"/>
        <end position="153"/>
    </location>
</feature>
<feature type="strand" evidence="5">
    <location>
        <begin position="155"/>
        <end position="162"/>
    </location>
</feature>
<feature type="helix" evidence="5">
    <location>
        <begin position="163"/>
        <end position="171"/>
    </location>
</feature>
<feature type="strand" evidence="5">
    <location>
        <begin position="176"/>
        <end position="183"/>
    </location>
</feature>
<feature type="helix" evidence="5">
    <location>
        <begin position="184"/>
        <end position="192"/>
    </location>
</feature>
<feature type="strand" evidence="5">
    <location>
        <begin position="197"/>
        <end position="202"/>
    </location>
</feature>
<feature type="helix" evidence="5">
    <location>
        <begin position="203"/>
        <end position="210"/>
    </location>
</feature>
<feature type="helix" evidence="5">
    <location>
        <begin position="213"/>
        <end position="215"/>
    </location>
</feature>
<feature type="strand" evidence="5">
    <location>
        <begin position="218"/>
        <end position="227"/>
    </location>
</feature>
<feature type="helix" evidence="4">
    <location>
        <begin position="228"/>
        <end position="230"/>
    </location>
</feature>
<feature type="strand" evidence="4">
    <location>
        <begin position="236"/>
        <end position="238"/>
    </location>
</feature>
<feature type="helix" evidence="5">
    <location>
        <begin position="242"/>
        <end position="257"/>
    </location>
</feature>
<feature type="helix" evidence="5">
    <location>
        <begin position="260"/>
        <end position="269"/>
    </location>
</feature>
<gene>
    <name type="primary">occT</name>
    <name type="synonym">occJ</name>
</gene>
<organism>
    <name type="scientific">Rhizobium radiobacter</name>
    <name type="common">Agrobacterium tumefaciens</name>
    <name type="synonym">Agrobacterium radiobacter</name>
    <dbReference type="NCBI Taxonomy" id="358"/>
    <lineage>
        <taxon>Bacteria</taxon>
        <taxon>Pseudomonadati</taxon>
        <taxon>Pseudomonadota</taxon>
        <taxon>Alphaproteobacteria</taxon>
        <taxon>Hyphomicrobiales</taxon>
        <taxon>Rhizobiaceae</taxon>
        <taxon>Rhizobium/Agrobacterium group</taxon>
        <taxon>Agrobacterium</taxon>
        <taxon>Agrobacterium tumefaciens complex</taxon>
    </lineage>
</organism>
<comment type="function">
    <text>Component of the octopine active transport system probably consisting of four subunits: Q, M, P and T.</text>
</comment>
<comment type="subcellular location">
    <subcellularLocation>
        <location>Periplasm</location>
    </subcellularLocation>
</comment>
<comment type="induction">
    <text>By octopine.</text>
</comment>
<comment type="similarity">
    <text evidence="3">Belongs to the bacterial solute-binding protein 3 family.</text>
</comment>
<sequence length="276" mass="28986">MKLKTILCAALLLVAGQAAAQEKSITIATEGGYAPWNFSGPGGKLDGFEIDLANALCEKMKAKCQIVAQNWDGIMPSLTGKKYDAIMAAMSVTPKRQEVIGFSIPYAAGINGFAVMGDSKLAEMPGLGETYSLDSQADAAKKAIADISSFLNGTTVGVQGSTTASTFLDKYFKGSVDIKEYKSVEEHNLDLTSGRLDAVLANATVLAAAIEKPEMKGAKLVGPLFSGGEFGVVAVGLRKEDTALKADFDAAIKAASEDGTIKTLSLKWFKVDVTPQ</sequence>
<dbReference type="EMBL" id="AF242881">
    <property type="protein sequence ID" value="AAA98382.1"/>
    <property type="molecule type" value="Genomic_DNA"/>
</dbReference>
<dbReference type="EMBL" id="M77784">
    <property type="protein sequence ID" value="AAA50517.1"/>
    <property type="molecule type" value="Genomic_DNA"/>
</dbReference>
<dbReference type="PIR" id="D41044">
    <property type="entry name" value="D41044"/>
</dbReference>
<dbReference type="RefSeq" id="NP_059711.1">
    <property type="nucleotide sequence ID" value="NC_002377.1"/>
</dbReference>
<dbReference type="RefSeq" id="WP_010892399.1">
    <property type="nucleotide sequence ID" value="NZ_QSNU01000012.1"/>
</dbReference>
<dbReference type="PDB" id="5ORE">
    <property type="method" value="X-ray"/>
    <property type="resolution" value="2.35 A"/>
    <property type="chains" value="A=21-276"/>
</dbReference>
<dbReference type="PDB" id="5ORG">
    <property type="method" value="X-ray"/>
    <property type="resolution" value="1.99 A"/>
    <property type="chains" value="A/B=21-276"/>
</dbReference>
<dbReference type="PDBsum" id="5ORE"/>
<dbReference type="PDBsum" id="5ORG"/>
<dbReference type="SMR" id="P0A4F8"/>
<dbReference type="TCDB" id="3.A.1.3.5">
    <property type="family name" value="the atp-binding cassette (abc) superfamily"/>
</dbReference>
<dbReference type="OrthoDB" id="9807134at2"/>
<dbReference type="GO" id="GO:0016020">
    <property type="term" value="C:membrane"/>
    <property type="evidence" value="ECO:0007669"/>
    <property type="project" value="InterPro"/>
</dbReference>
<dbReference type="GO" id="GO:0030288">
    <property type="term" value="C:outer membrane-bounded periplasmic space"/>
    <property type="evidence" value="ECO:0007669"/>
    <property type="project" value="InterPro"/>
</dbReference>
<dbReference type="GO" id="GO:0015276">
    <property type="term" value="F:ligand-gated monoatomic ion channel activity"/>
    <property type="evidence" value="ECO:0007669"/>
    <property type="project" value="InterPro"/>
</dbReference>
<dbReference type="CDD" id="cd13699">
    <property type="entry name" value="PBP2_OccT_like"/>
    <property type="match status" value="1"/>
</dbReference>
<dbReference type="Gene3D" id="3.40.190.10">
    <property type="entry name" value="Periplasmic binding protein-like II"/>
    <property type="match status" value="2"/>
</dbReference>
<dbReference type="InterPro" id="IPR001320">
    <property type="entry name" value="Iontro_rcpt_C"/>
</dbReference>
<dbReference type="InterPro" id="IPR005768">
    <property type="entry name" value="Lys_Arg_Orn-bd"/>
</dbReference>
<dbReference type="InterPro" id="IPR018313">
    <property type="entry name" value="SBP_3_CS"/>
</dbReference>
<dbReference type="InterPro" id="IPR001638">
    <property type="entry name" value="Solute-binding_3/MltF_N"/>
</dbReference>
<dbReference type="NCBIfam" id="TIGR01096">
    <property type="entry name" value="3A0103s03R"/>
    <property type="match status" value="1"/>
</dbReference>
<dbReference type="PANTHER" id="PTHR35936:SF19">
    <property type="entry name" value="AMINO-ACID-BINDING PROTEIN YXEM-RELATED"/>
    <property type="match status" value="1"/>
</dbReference>
<dbReference type="PANTHER" id="PTHR35936">
    <property type="entry name" value="MEMBRANE-BOUND LYTIC MUREIN TRANSGLYCOSYLASE F"/>
    <property type="match status" value="1"/>
</dbReference>
<dbReference type="Pfam" id="PF00497">
    <property type="entry name" value="SBP_bac_3"/>
    <property type="match status" value="1"/>
</dbReference>
<dbReference type="SMART" id="SM00062">
    <property type="entry name" value="PBPb"/>
    <property type="match status" value="1"/>
</dbReference>
<dbReference type="SMART" id="SM00079">
    <property type="entry name" value="PBPe"/>
    <property type="match status" value="1"/>
</dbReference>
<dbReference type="SUPFAM" id="SSF53850">
    <property type="entry name" value="Periplasmic binding protein-like II"/>
    <property type="match status" value="1"/>
</dbReference>
<dbReference type="PROSITE" id="PS01039">
    <property type="entry name" value="SBP_BACTERIAL_3"/>
    <property type="match status" value="1"/>
</dbReference>
<evidence type="ECO:0000250" key="1"/>
<evidence type="ECO:0000255" key="2"/>
<evidence type="ECO:0000305" key="3"/>
<evidence type="ECO:0007829" key="4">
    <source>
        <dbReference type="PDB" id="5ORE"/>
    </source>
</evidence>
<evidence type="ECO:0007829" key="5">
    <source>
        <dbReference type="PDB" id="5ORG"/>
    </source>
</evidence>
<keyword id="KW-0002">3D-structure</keyword>
<keyword id="KW-1015">Disulfide bond</keyword>
<keyword id="KW-0574">Periplasm</keyword>
<keyword id="KW-0614">Plasmid</keyword>
<keyword id="KW-0732">Signal</keyword>
<keyword id="KW-0813">Transport</keyword>